<feature type="chain" id="PRO_0000315740" description="Protein SPT2 homolog">
    <location>
        <begin position="1"/>
        <end position="778"/>
    </location>
</feature>
<feature type="region of interest" description="Important for interaction with DNA" evidence="2">
    <location>
        <begin position="1"/>
        <end position="665"/>
    </location>
</feature>
<feature type="region of interest" description="Disordered" evidence="4">
    <location>
        <begin position="1"/>
        <end position="21"/>
    </location>
</feature>
<feature type="region of interest" description="Disordered" evidence="4">
    <location>
        <begin position="50"/>
        <end position="625"/>
    </location>
</feature>
<feature type="region of interest" description="Disordered" evidence="4">
    <location>
        <begin position="639"/>
        <end position="685"/>
    </location>
</feature>
<feature type="region of interest" description="Important for interaction with histones" evidence="2">
    <location>
        <begin position="666"/>
        <end position="778"/>
    </location>
</feature>
<feature type="coiled-coil region" evidence="3">
    <location>
        <begin position="44"/>
        <end position="83"/>
    </location>
</feature>
<feature type="coiled-coil region" evidence="3">
    <location>
        <begin position="193"/>
        <end position="221"/>
    </location>
</feature>
<feature type="coiled-coil region" evidence="3">
    <location>
        <begin position="735"/>
        <end position="778"/>
    </location>
</feature>
<feature type="compositionally biased region" description="Basic and acidic residues" evidence="4">
    <location>
        <begin position="50"/>
        <end position="78"/>
    </location>
</feature>
<feature type="compositionally biased region" description="Acidic residues" evidence="4">
    <location>
        <begin position="114"/>
        <end position="135"/>
    </location>
</feature>
<feature type="compositionally biased region" description="Pro residues" evidence="4">
    <location>
        <begin position="153"/>
        <end position="167"/>
    </location>
</feature>
<feature type="compositionally biased region" description="Basic and acidic residues" evidence="4">
    <location>
        <begin position="190"/>
        <end position="227"/>
    </location>
</feature>
<feature type="compositionally biased region" description="Polar residues" evidence="4">
    <location>
        <begin position="242"/>
        <end position="269"/>
    </location>
</feature>
<feature type="compositionally biased region" description="Basic and acidic residues" evidence="4">
    <location>
        <begin position="270"/>
        <end position="286"/>
    </location>
</feature>
<feature type="compositionally biased region" description="Low complexity" evidence="4">
    <location>
        <begin position="312"/>
        <end position="335"/>
    </location>
</feature>
<feature type="compositionally biased region" description="Gly residues" evidence="4">
    <location>
        <begin position="336"/>
        <end position="357"/>
    </location>
</feature>
<feature type="compositionally biased region" description="Gly residues" evidence="4">
    <location>
        <begin position="365"/>
        <end position="384"/>
    </location>
</feature>
<feature type="compositionally biased region" description="Low complexity" evidence="4">
    <location>
        <begin position="385"/>
        <end position="394"/>
    </location>
</feature>
<feature type="compositionally biased region" description="Gly residues" evidence="4">
    <location>
        <begin position="395"/>
        <end position="417"/>
    </location>
</feature>
<feature type="compositionally biased region" description="Low complexity" evidence="4">
    <location>
        <begin position="418"/>
        <end position="493"/>
    </location>
</feature>
<feature type="compositionally biased region" description="Low complexity" evidence="4">
    <location>
        <begin position="506"/>
        <end position="559"/>
    </location>
</feature>
<feature type="compositionally biased region" description="Polar residues" evidence="4">
    <location>
        <begin position="588"/>
        <end position="604"/>
    </location>
</feature>
<feature type="compositionally biased region" description="Pro residues" evidence="4">
    <location>
        <begin position="662"/>
        <end position="671"/>
    </location>
</feature>
<gene>
    <name type="primary">spty2d1</name>
</gene>
<comment type="function">
    <text evidence="1 2">Histone chaperone that stabilizes pre-existing histone tetramers and regulates replication-independent histone exchange on chromatin. Required for normal chromatin refolding in the coding region of transcribed genes, and for the suppression of spurious transcription. Binds DNA and histones and promotes nucleosome assembly (in vitro). Facilitates formation of tetrameric histone complexes containing histone H3 and H4 (By similarity). Modulates RNA polymerase 1-mediated transcription (By similarity). Binds DNA, with a preference for branched DNA species, such as Y-form DNA and Holliday junction DNA (By similarity).</text>
</comment>
<comment type="subunit">
    <text evidence="2">Interacts with histones. Interacts with a heterotetrameric complex formed by histone H3 and H4, especially when the histone tetramer is not bound to DNA.</text>
</comment>
<comment type="subcellular location">
    <subcellularLocation>
        <location evidence="1">Nucleus</location>
        <location evidence="1">Nucleolus</location>
    </subcellularLocation>
</comment>
<comment type="domain">
    <text evidence="2">The acidic C-terminal domain mediates interaction with histone H3/H4 complexes.</text>
</comment>
<comment type="similarity">
    <text evidence="5">Belongs to the SPT2 family.</text>
</comment>
<accession>Q0V9A3</accession>
<proteinExistence type="evidence at transcript level"/>
<protein>
    <recommendedName>
        <fullName>Protein SPT2 homolog</fullName>
    </recommendedName>
    <alternativeName>
        <fullName>SPT2 domain-containing protein 1</fullName>
    </alternativeName>
</protein>
<organism>
    <name type="scientific">Xenopus tropicalis</name>
    <name type="common">Western clawed frog</name>
    <name type="synonym">Silurana tropicalis</name>
    <dbReference type="NCBI Taxonomy" id="8364"/>
    <lineage>
        <taxon>Eukaryota</taxon>
        <taxon>Metazoa</taxon>
        <taxon>Chordata</taxon>
        <taxon>Craniata</taxon>
        <taxon>Vertebrata</taxon>
        <taxon>Euteleostomi</taxon>
        <taxon>Amphibia</taxon>
        <taxon>Batrachia</taxon>
        <taxon>Anura</taxon>
        <taxon>Pipoidea</taxon>
        <taxon>Pipidae</taxon>
        <taxon>Xenopodinae</taxon>
        <taxon>Xenopus</taxon>
        <taxon>Silurana</taxon>
    </lineage>
</organism>
<reference key="1">
    <citation type="submission" date="2006-08" db="EMBL/GenBank/DDBJ databases">
        <authorList>
            <consortium name="NIH - Xenopus Gene Collection (XGC) project"/>
        </authorList>
    </citation>
    <scope>NUCLEOTIDE SEQUENCE [LARGE SCALE MRNA]</scope>
    <source>
        <strain>N6</strain>
        <tissue>Oviduct</tissue>
    </source>
</reference>
<sequence>MDFHSVLKMAAAKPGSDGIAKRYSLAVGPPKKDPKVKGVDSAAVQAFLRKKDEESRRKETVEKRKKEDLLAKRKELKHDRKARAMASRTKDNFKGYNGIPIEEKPRKRKRSGTEEDQNDNMAAEGEEYMTEEELYEYSQSESEQEEEEELPPQKVPKPAPGKKPPTPALNFNDLLRLAERKQYEPVEVVRPVKKEERLRTAEELKELEFLERKAQKADRKDPKRNEQLVKVSKGSGDKYSSLKGTHSGNSKSSSTEQNGTIRKSSSDTGSRTEKSGSVFHTKESKKPSSAKDLGGKGSRPNVTGDGKDRHSSSQPSAASNSAFGRPSGSARPSGSSGPGRPLGGSGSSSGKSTGGSASGSARSVGGSGSGSGKPMGGSGSGKPIGGLHSSHGSGKPTGGTGSGSGKPTGASGSGSGKPTGSSGSAKSVRESGSGSRSVRESGSGSRSVRESGSGSGSARSVRESGSGSGSARSVRESGSGSGSARSVRESGSAKQAGGPGSGRALGSGSSFARPSSNSSPAPGKPAAGSGSARPSSSGTPRSSSMGHSTSNSSRQPSSSGAVRPSSGPPTGATPKGPSPRPGAGPTSVRPNSTSVPGSARSSLGSGPGRPVAASATGQLAPAKPKCTVVAETISSKNFVPKSINGHMNGIRTAAPPGHRPAMRPPGPPLPPITSSYKRRIDDDDDYDSEMDDFIDDGGECQDEISKHIREIFGYDRTKYRDESDYALRYMESTFREQQKEEARSLRLGIQEDLEELQREEEELKRKAKQLKAAKKMSR</sequence>
<dbReference type="EMBL" id="BC121680">
    <property type="protein sequence ID" value="AAI21681.1"/>
    <property type="molecule type" value="mRNA"/>
</dbReference>
<dbReference type="RefSeq" id="NP_001072434.1">
    <property type="nucleotide sequence ID" value="NM_001078966.1"/>
</dbReference>
<dbReference type="SMR" id="Q0V9A3"/>
<dbReference type="FunCoup" id="Q0V9A3">
    <property type="interactions" value="2481"/>
</dbReference>
<dbReference type="STRING" id="8364.ENSXETP00000034761"/>
<dbReference type="PaxDb" id="8364-ENSXETP00000043169"/>
<dbReference type="GeneID" id="779888"/>
<dbReference type="KEGG" id="xtr:779888"/>
<dbReference type="AGR" id="Xenbase:XB-GENE-5939956"/>
<dbReference type="CTD" id="144108"/>
<dbReference type="Xenbase" id="XB-GENE-5939956">
    <property type="gene designation" value="spty2d1"/>
</dbReference>
<dbReference type="eggNOG" id="ENOG502QWHS">
    <property type="taxonomic scope" value="Eukaryota"/>
</dbReference>
<dbReference type="HOGENOM" id="CLU_516363_0_0_1"/>
<dbReference type="InParanoid" id="Q0V9A3"/>
<dbReference type="OMA" id="GPMATPH"/>
<dbReference type="OrthoDB" id="6259853at2759"/>
<dbReference type="Proteomes" id="UP000008143">
    <property type="component" value="Chromosome 4"/>
</dbReference>
<dbReference type="GO" id="GO:0005730">
    <property type="term" value="C:nucleolus"/>
    <property type="evidence" value="ECO:0000250"/>
    <property type="project" value="UniProtKB"/>
</dbReference>
<dbReference type="GO" id="GO:0003677">
    <property type="term" value="F:DNA binding"/>
    <property type="evidence" value="ECO:0000250"/>
    <property type="project" value="UniProtKB"/>
</dbReference>
<dbReference type="GO" id="GO:0042393">
    <property type="term" value="F:histone binding"/>
    <property type="evidence" value="ECO:0000250"/>
    <property type="project" value="UniProtKB"/>
</dbReference>
<dbReference type="GO" id="GO:0140713">
    <property type="term" value="F:histone chaperone activity"/>
    <property type="evidence" value="ECO:0000250"/>
    <property type="project" value="UniProtKB"/>
</dbReference>
<dbReference type="GO" id="GO:0001042">
    <property type="term" value="F:RNA polymerase I core binding"/>
    <property type="evidence" value="ECO:0000250"/>
    <property type="project" value="UniProtKB"/>
</dbReference>
<dbReference type="GO" id="GO:0031507">
    <property type="term" value="P:heterochromatin formation"/>
    <property type="evidence" value="ECO:0000250"/>
    <property type="project" value="UniProtKB"/>
</dbReference>
<dbReference type="GO" id="GO:0006334">
    <property type="term" value="P:nucleosome assembly"/>
    <property type="evidence" value="ECO:0000250"/>
    <property type="project" value="UniProtKB"/>
</dbReference>
<dbReference type="GO" id="GO:0006355">
    <property type="term" value="P:regulation of DNA-templated transcription"/>
    <property type="evidence" value="ECO:0000250"/>
    <property type="project" value="UniProtKB"/>
</dbReference>
<dbReference type="InterPro" id="IPR013256">
    <property type="entry name" value="Chromatin_SPT2"/>
</dbReference>
<dbReference type="InterPro" id="IPR054552">
    <property type="entry name" value="SPT2_N"/>
</dbReference>
<dbReference type="PANTHER" id="PTHR22691:SF8">
    <property type="entry name" value="PROTEIN SPT2 HOMOLOG"/>
    <property type="match status" value="1"/>
</dbReference>
<dbReference type="PANTHER" id="PTHR22691">
    <property type="entry name" value="YEAST SPT2-RELATED"/>
    <property type="match status" value="1"/>
</dbReference>
<dbReference type="Pfam" id="PF08243">
    <property type="entry name" value="SPT2"/>
    <property type="match status" value="1"/>
</dbReference>
<dbReference type="Pfam" id="PF22878">
    <property type="entry name" value="SPT2_N"/>
    <property type="match status" value="1"/>
</dbReference>
<dbReference type="SMART" id="SM00784">
    <property type="entry name" value="SPT2"/>
    <property type="match status" value="1"/>
</dbReference>
<name>SPT2_XENTR</name>
<keyword id="KW-0175">Coiled coil</keyword>
<keyword id="KW-0238">DNA-binding</keyword>
<keyword id="KW-0539">Nucleus</keyword>
<keyword id="KW-1185">Reference proteome</keyword>
<keyword id="KW-0804">Transcription</keyword>
<keyword id="KW-0805">Transcription regulation</keyword>
<evidence type="ECO:0000250" key="1">
    <source>
        <dbReference type="UniProtKB" id="E1BUG7"/>
    </source>
</evidence>
<evidence type="ECO:0000250" key="2">
    <source>
        <dbReference type="UniProtKB" id="Q68D10"/>
    </source>
</evidence>
<evidence type="ECO:0000255" key="3"/>
<evidence type="ECO:0000256" key="4">
    <source>
        <dbReference type="SAM" id="MobiDB-lite"/>
    </source>
</evidence>
<evidence type="ECO:0000305" key="5"/>